<proteinExistence type="inferred from homology"/>
<keyword id="KW-0998">Cell outer membrane</keyword>
<keyword id="KW-0961">Cell wall biogenesis/degradation</keyword>
<keyword id="KW-0449">Lipoprotein</keyword>
<keyword id="KW-0456">Lyase</keyword>
<keyword id="KW-0472">Membrane</keyword>
<keyword id="KW-0564">Palmitate</keyword>
<keyword id="KW-1185">Reference proteome</keyword>
<keyword id="KW-0732">Signal</keyword>
<organism>
    <name type="scientific">Escherichia coli O157:H7</name>
    <dbReference type="NCBI Taxonomy" id="83334"/>
    <lineage>
        <taxon>Bacteria</taxon>
        <taxon>Pseudomonadati</taxon>
        <taxon>Pseudomonadota</taxon>
        <taxon>Gammaproteobacteria</taxon>
        <taxon>Enterobacterales</taxon>
        <taxon>Enterobacteriaceae</taxon>
        <taxon>Escherichia</taxon>
    </lineage>
</organism>
<comment type="function">
    <text evidence="1">Murein-degrading enzyme. May play a role in recycling of muropeptides during cell elongation and/or cell division.</text>
</comment>
<comment type="catalytic activity">
    <reaction evidence="1">
        <text>Exolytic cleavage of the (1-&gt;4)-beta-glycosidic linkage between N-acetylmuramic acid (MurNAc) and N-acetylglucosamine (GlcNAc) residues in peptidoglycan, from either the reducing or the non-reducing ends of the peptidoglycan chains, with concomitant formation of a 1,6-anhydrobond in the MurNAc residue.</text>
        <dbReference type="EC" id="4.2.2.n1"/>
    </reaction>
</comment>
<comment type="subcellular location">
    <subcellularLocation>
        <location evidence="1">Cell outer membrane</location>
        <topology evidence="1">Lipid-anchor</topology>
    </subcellularLocation>
</comment>
<comment type="similarity">
    <text evidence="1">Belongs to the transglycosylase Slt family.</text>
</comment>
<comment type="sequence caution" evidence="2">
    <conflict type="erroneous initiation">
        <sequence resource="EMBL-CDS" id="AAG58094"/>
    </conflict>
    <text>Extended N-terminus.</text>
</comment>
<sequence length="359" mass="40054">MKKYLALALIAPLLISCSTTKKGGTYNEAWVKDTNGFDILMGQFAHNIENIWGFKEVVIAGPKDYVKYTDQYQTRSHINFDDGTITIETIAGTEPAAHLRRAIIKTLLMGDDPSSVDLYSDVDDITISKEPFLYGQVVDNTGQPIRWEGRASNFADYLLKNRLKSRSNGLRIIYSVTINMVPNHLDKRAHKYLGMVRQASRKYGVDESLILAIMQTESSFNPYAVSRSDALGLMQVVQHTAGKDVFRSQGKSGTPSRSFLFDPASNIDTGTAYLAMLNNVYLGGIDNPTSRRYAVITAYNGGAGSVLRVFSNDKIQAANIINTMTPGDVYQTLTTRHPSAESRRYLYKVNTAQKSYRRR</sequence>
<gene>
    <name evidence="1" type="primary">mltC</name>
    <name type="ordered locus">Z4308</name>
    <name type="ordered locus">ECs3839</name>
</gene>
<name>MLTC_ECO57</name>
<accession>Q8XCS6</accession>
<accession>Q7AAW4</accession>
<evidence type="ECO:0000255" key="1">
    <source>
        <dbReference type="HAMAP-Rule" id="MF_01616"/>
    </source>
</evidence>
<evidence type="ECO:0000305" key="2"/>
<feature type="signal peptide" evidence="1">
    <location>
        <begin position="1"/>
        <end position="16"/>
    </location>
</feature>
<feature type="chain" id="PRO_0000032786" description="Membrane-bound lytic murein transglycosylase C">
    <location>
        <begin position="17"/>
        <end position="359"/>
    </location>
</feature>
<feature type="lipid moiety-binding region" description="N-palmitoyl cysteine" evidence="1">
    <location>
        <position position="17"/>
    </location>
</feature>
<feature type="lipid moiety-binding region" description="S-diacylglycerol cysteine" evidence="1">
    <location>
        <position position="17"/>
    </location>
</feature>
<protein>
    <recommendedName>
        <fullName evidence="1">Membrane-bound lytic murein transglycosylase C</fullName>
        <ecNumber evidence="1">4.2.2.n1</ecNumber>
    </recommendedName>
    <alternativeName>
        <fullName evidence="1">Murein lyase C</fullName>
    </alternativeName>
</protein>
<dbReference type="EC" id="4.2.2.n1" evidence="1"/>
<dbReference type="EMBL" id="AE005174">
    <property type="protein sequence ID" value="AAG58094.1"/>
    <property type="status" value="ALT_INIT"/>
    <property type="molecule type" value="Genomic_DNA"/>
</dbReference>
<dbReference type="EMBL" id="BA000007">
    <property type="protein sequence ID" value="BAB37262.2"/>
    <property type="molecule type" value="Genomic_DNA"/>
</dbReference>
<dbReference type="PIR" id="B85954">
    <property type="entry name" value="B85954"/>
</dbReference>
<dbReference type="PIR" id="G91108">
    <property type="entry name" value="G91108"/>
</dbReference>
<dbReference type="RefSeq" id="NP_311866.2">
    <property type="nucleotide sequence ID" value="NC_002695.1"/>
</dbReference>
<dbReference type="RefSeq" id="WP_001302020.1">
    <property type="nucleotide sequence ID" value="NZ_VOAI01000003.1"/>
</dbReference>
<dbReference type="SMR" id="Q8XCS6"/>
<dbReference type="STRING" id="155864.Z4308"/>
<dbReference type="CAZy" id="GH23">
    <property type="family name" value="Glycoside Hydrolase Family 23"/>
</dbReference>
<dbReference type="GeneID" id="916343"/>
<dbReference type="KEGG" id="ece:Z4308"/>
<dbReference type="KEGG" id="ecs:ECs_3839"/>
<dbReference type="PATRIC" id="fig|386585.9.peg.4007"/>
<dbReference type="eggNOG" id="COG0741">
    <property type="taxonomic scope" value="Bacteria"/>
</dbReference>
<dbReference type="HOGENOM" id="CLU_044583_0_0_6"/>
<dbReference type="OMA" id="AIMQIES"/>
<dbReference type="Proteomes" id="UP000000558">
    <property type="component" value="Chromosome"/>
</dbReference>
<dbReference type="Proteomes" id="UP000002519">
    <property type="component" value="Chromosome"/>
</dbReference>
<dbReference type="GO" id="GO:0009279">
    <property type="term" value="C:cell outer membrane"/>
    <property type="evidence" value="ECO:0007669"/>
    <property type="project" value="UniProtKB-SubCell"/>
</dbReference>
<dbReference type="GO" id="GO:0016798">
    <property type="term" value="F:hydrolase activity, acting on glycosyl bonds"/>
    <property type="evidence" value="ECO:0007669"/>
    <property type="project" value="InterPro"/>
</dbReference>
<dbReference type="GO" id="GO:0008933">
    <property type="term" value="F:peptidoglycan lytic transglycosylase activity"/>
    <property type="evidence" value="ECO:0007669"/>
    <property type="project" value="UniProtKB-UniRule"/>
</dbReference>
<dbReference type="GO" id="GO:0016998">
    <property type="term" value="P:cell wall macromolecule catabolic process"/>
    <property type="evidence" value="ECO:0007669"/>
    <property type="project" value="UniProtKB-UniRule"/>
</dbReference>
<dbReference type="GO" id="GO:0071555">
    <property type="term" value="P:cell wall organization"/>
    <property type="evidence" value="ECO:0007669"/>
    <property type="project" value="UniProtKB-KW"/>
</dbReference>
<dbReference type="GO" id="GO:0000270">
    <property type="term" value="P:peptidoglycan metabolic process"/>
    <property type="evidence" value="ECO:0007669"/>
    <property type="project" value="InterPro"/>
</dbReference>
<dbReference type="CDD" id="cd16893">
    <property type="entry name" value="LT_MltC_MltE"/>
    <property type="match status" value="1"/>
</dbReference>
<dbReference type="FunFam" id="1.10.530.10:FF:000002">
    <property type="entry name" value="Membrane-bound lytic murein transglycosylase C"/>
    <property type="match status" value="1"/>
</dbReference>
<dbReference type="Gene3D" id="1.10.530.10">
    <property type="match status" value="1"/>
</dbReference>
<dbReference type="HAMAP" id="MF_01616">
    <property type="entry name" value="MltC"/>
    <property type="match status" value="1"/>
</dbReference>
<dbReference type="InterPro" id="IPR023346">
    <property type="entry name" value="Lysozyme-like_dom_sf"/>
</dbReference>
<dbReference type="InterPro" id="IPR023664">
    <property type="entry name" value="Murein_transglycosylaseC"/>
</dbReference>
<dbReference type="InterPro" id="IPR024570">
    <property type="entry name" value="Murein_transglycosylaseC_N"/>
</dbReference>
<dbReference type="InterPro" id="IPR000189">
    <property type="entry name" value="Transglyc_AS"/>
</dbReference>
<dbReference type="InterPro" id="IPR008258">
    <property type="entry name" value="Transglycosylase_SLT_dom_1"/>
</dbReference>
<dbReference type="NCBIfam" id="NF008670">
    <property type="entry name" value="PRK11671.1"/>
    <property type="match status" value="1"/>
</dbReference>
<dbReference type="PANTHER" id="PTHR37423:SF2">
    <property type="entry name" value="MEMBRANE-BOUND LYTIC MUREIN TRANSGLYCOSYLASE C"/>
    <property type="match status" value="1"/>
</dbReference>
<dbReference type="PANTHER" id="PTHR37423">
    <property type="entry name" value="SOLUBLE LYTIC MUREIN TRANSGLYCOSYLASE-RELATED"/>
    <property type="match status" value="1"/>
</dbReference>
<dbReference type="Pfam" id="PF11873">
    <property type="entry name" value="Mltc_N"/>
    <property type="match status" value="1"/>
</dbReference>
<dbReference type="Pfam" id="PF01464">
    <property type="entry name" value="SLT"/>
    <property type="match status" value="1"/>
</dbReference>
<dbReference type="SUPFAM" id="SSF53955">
    <property type="entry name" value="Lysozyme-like"/>
    <property type="match status" value="1"/>
</dbReference>
<dbReference type="PROSITE" id="PS51257">
    <property type="entry name" value="PROKAR_LIPOPROTEIN"/>
    <property type="match status" value="1"/>
</dbReference>
<dbReference type="PROSITE" id="PS00922">
    <property type="entry name" value="TRANSGLYCOSYLASE"/>
    <property type="match status" value="1"/>
</dbReference>
<reference key="1">
    <citation type="journal article" date="2001" name="Nature">
        <title>Genome sequence of enterohaemorrhagic Escherichia coli O157:H7.</title>
        <authorList>
            <person name="Perna N.T."/>
            <person name="Plunkett G. III"/>
            <person name="Burland V."/>
            <person name="Mau B."/>
            <person name="Glasner J.D."/>
            <person name="Rose D.J."/>
            <person name="Mayhew G.F."/>
            <person name="Evans P.S."/>
            <person name="Gregor J."/>
            <person name="Kirkpatrick H.A."/>
            <person name="Posfai G."/>
            <person name="Hackett J."/>
            <person name="Klink S."/>
            <person name="Boutin A."/>
            <person name="Shao Y."/>
            <person name="Miller L."/>
            <person name="Grotbeck E.J."/>
            <person name="Davis N.W."/>
            <person name="Lim A."/>
            <person name="Dimalanta E.T."/>
            <person name="Potamousis K."/>
            <person name="Apodaca J."/>
            <person name="Anantharaman T.S."/>
            <person name="Lin J."/>
            <person name="Yen G."/>
            <person name="Schwartz D.C."/>
            <person name="Welch R.A."/>
            <person name="Blattner F.R."/>
        </authorList>
    </citation>
    <scope>NUCLEOTIDE SEQUENCE [LARGE SCALE GENOMIC DNA]</scope>
    <source>
        <strain>O157:H7 / EDL933 / ATCC 700927 / EHEC</strain>
    </source>
</reference>
<reference key="2">
    <citation type="journal article" date="2001" name="DNA Res.">
        <title>Complete genome sequence of enterohemorrhagic Escherichia coli O157:H7 and genomic comparison with a laboratory strain K-12.</title>
        <authorList>
            <person name="Hayashi T."/>
            <person name="Makino K."/>
            <person name="Ohnishi M."/>
            <person name="Kurokawa K."/>
            <person name="Ishii K."/>
            <person name="Yokoyama K."/>
            <person name="Han C.-G."/>
            <person name="Ohtsubo E."/>
            <person name="Nakayama K."/>
            <person name="Murata T."/>
            <person name="Tanaka M."/>
            <person name="Tobe T."/>
            <person name="Iida T."/>
            <person name="Takami H."/>
            <person name="Honda T."/>
            <person name="Sasakawa C."/>
            <person name="Ogasawara N."/>
            <person name="Yasunaga T."/>
            <person name="Kuhara S."/>
            <person name="Shiba T."/>
            <person name="Hattori M."/>
            <person name="Shinagawa H."/>
        </authorList>
    </citation>
    <scope>NUCLEOTIDE SEQUENCE [LARGE SCALE GENOMIC DNA]</scope>
    <source>
        <strain>O157:H7 / Sakai / RIMD 0509952 / EHEC</strain>
    </source>
</reference>